<gene>
    <name evidence="1" type="primary">mtnD</name>
    <name type="ordered locus">CKO_03973</name>
</gene>
<evidence type="ECO:0000255" key="1">
    <source>
        <dbReference type="HAMAP-Rule" id="MF_01682"/>
    </source>
</evidence>
<comment type="function">
    <text evidence="1">Catalyzes 2 different reactions between oxygen and the acireductone 1,2-dihydroxy-3-keto-5-methylthiopentene (DHK-MTPene) depending upon the metal bound in the active site. Fe-containing acireductone dioxygenase (Fe-ARD) produces formate and 2-keto-4-methylthiobutyrate (KMTB), the alpha-ketoacid precursor of methionine in the methionine recycle pathway. Ni-containing acireductone dioxygenase (Ni-ARD) produces methylthiopropionate, carbon monoxide and formate, and does not lie on the methionine recycle pathway.</text>
</comment>
<comment type="catalytic activity">
    <reaction evidence="1">
        <text>1,2-dihydroxy-5-(methylsulfanyl)pent-1-en-3-one + O2 = 3-(methylsulfanyl)propanoate + CO + formate + 2 H(+)</text>
        <dbReference type="Rhea" id="RHEA:14161"/>
        <dbReference type="ChEBI" id="CHEBI:15378"/>
        <dbReference type="ChEBI" id="CHEBI:15379"/>
        <dbReference type="ChEBI" id="CHEBI:15740"/>
        <dbReference type="ChEBI" id="CHEBI:17245"/>
        <dbReference type="ChEBI" id="CHEBI:49016"/>
        <dbReference type="ChEBI" id="CHEBI:49252"/>
        <dbReference type="EC" id="1.13.11.53"/>
    </reaction>
</comment>
<comment type="catalytic activity">
    <reaction evidence="1">
        <text>1,2-dihydroxy-5-(methylsulfanyl)pent-1-en-3-one + O2 = 4-methylsulfanyl-2-oxobutanoate + formate + 2 H(+)</text>
        <dbReference type="Rhea" id="RHEA:24504"/>
        <dbReference type="ChEBI" id="CHEBI:15378"/>
        <dbReference type="ChEBI" id="CHEBI:15379"/>
        <dbReference type="ChEBI" id="CHEBI:15740"/>
        <dbReference type="ChEBI" id="CHEBI:16723"/>
        <dbReference type="ChEBI" id="CHEBI:49252"/>
        <dbReference type="EC" id="1.13.11.54"/>
    </reaction>
</comment>
<comment type="cofactor">
    <cofactor evidence="1">
        <name>Fe(2+)</name>
        <dbReference type="ChEBI" id="CHEBI:29033"/>
    </cofactor>
    <text evidence="1">Binds 1 Fe(2+) cation per monomer.</text>
</comment>
<comment type="cofactor">
    <cofactor evidence="1">
        <name>Ni(2+)</name>
        <dbReference type="ChEBI" id="CHEBI:49786"/>
    </cofactor>
    <text evidence="1">Binds 1 nickel ion per monomer.</text>
</comment>
<comment type="pathway">
    <text evidence="1">Amino-acid biosynthesis; L-methionine biosynthesis via salvage pathway; L-methionine from S-methyl-5-thio-alpha-D-ribose 1-phosphate: step 5/6.</text>
</comment>
<comment type="subunit">
    <text evidence="1">Monomer.</text>
</comment>
<comment type="similarity">
    <text evidence="1">Belongs to the acireductone dioxygenase (ARD) family.</text>
</comment>
<keyword id="KW-0028">Amino-acid biosynthesis</keyword>
<keyword id="KW-0223">Dioxygenase</keyword>
<keyword id="KW-0408">Iron</keyword>
<keyword id="KW-0479">Metal-binding</keyword>
<keyword id="KW-0486">Methionine biosynthesis</keyword>
<keyword id="KW-0533">Nickel</keyword>
<keyword id="KW-0560">Oxidoreductase</keyword>
<keyword id="KW-1185">Reference proteome</keyword>
<name>MTND_CITK8</name>
<organism>
    <name type="scientific">Citrobacter koseri (strain ATCC BAA-895 / CDC 4225-83 / SGSC4696)</name>
    <dbReference type="NCBI Taxonomy" id="290338"/>
    <lineage>
        <taxon>Bacteria</taxon>
        <taxon>Pseudomonadati</taxon>
        <taxon>Pseudomonadota</taxon>
        <taxon>Gammaproteobacteria</taxon>
        <taxon>Enterobacterales</taxon>
        <taxon>Enterobacteriaceae</taxon>
        <taxon>Citrobacter</taxon>
    </lineage>
</organism>
<reference key="1">
    <citation type="submission" date="2007-08" db="EMBL/GenBank/DDBJ databases">
        <authorList>
            <consortium name="The Citrobacter koseri Genome Sequencing Project"/>
            <person name="McClelland M."/>
            <person name="Sanderson E.K."/>
            <person name="Porwollik S."/>
            <person name="Spieth J."/>
            <person name="Clifton W.S."/>
            <person name="Latreille P."/>
            <person name="Courtney L."/>
            <person name="Wang C."/>
            <person name="Pepin K."/>
            <person name="Bhonagiri V."/>
            <person name="Nash W."/>
            <person name="Johnson M."/>
            <person name="Thiruvilangam P."/>
            <person name="Wilson R."/>
        </authorList>
    </citation>
    <scope>NUCLEOTIDE SEQUENCE [LARGE SCALE GENOMIC DNA]</scope>
    <source>
        <strain>ATCC BAA-895 / CDC 4225-83 / SGSC4696</strain>
    </source>
</reference>
<sequence length="180" mass="20162">MSALTIYSDKDASQPQWHSTDAAEIAQQLNAKGVRFERWVADRDLGQAPAPETVITAYQHAIDKLVAEKGYQSWDVISLRADNPQKEALRAKFLNEHTHGEDEVRFFVEGAGLFCLHIGDQVYQVLCEKNDLISVPAGTPHWFDMGSEPNFTAIRIFDNPEGWVAQFTGDAIADAYPRLL</sequence>
<accession>A8ANI2</accession>
<feature type="chain" id="PRO_0000359183" description="Acireductone dioxygenase">
    <location>
        <begin position="1"/>
        <end position="180"/>
    </location>
</feature>
<feature type="binding site" evidence="1">
    <location>
        <position position="97"/>
    </location>
    <ligand>
        <name>Fe(2+)</name>
        <dbReference type="ChEBI" id="CHEBI:29033"/>
    </ligand>
</feature>
<feature type="binding site" evidence="1">
    <location>
        <position position="97"/>
    </location>
    <ligand>
        <name>Ni(2+)</name>
        <dbReference type="ChEBI" id="CHEBI:49786"/>
    </ligand>
</feature>
<feature type="binding site" evidence="1">
    <location>
        <position position="99"/>
    </location>
    <ligand>
        <name>Fe(2+)</name>
        <dbReference type="ChEBI" id="CHEBI:29033"/>
    </ligand>
</feature>
<feature type="binding site" evidence="1">
    <location>
        <position position="99"/>
    </location>
    <ligand>
        <name>Ni(2+)</name>
        <dbReference type="ChEBI" id="CHEBI:49786"/>
    </ligand>
</feature>
<feature type="binding site" evidence="1">
    <location>
        <position position="103"/>
    </location>
    <ligand>
        <name>Fe(2+)</name>
        <dbReference type="ChEBI" id="CHEBI:29033"/>
    </ligand>
</feature>
<feature type="binding site" evidence="1">
    <location>
        <position position="103"/>
    </location>
    <ligand>
        <name>Ni(2+)</name>
        <dbReference type="ChEBI" id="CHEBI:49786"/>
    </ligand>
</feature>
<feature type="binding site" evidence="1">
    <location>
        <position position="141"/>
    </location>
    <ligand>
        <name>Fe(2+)</name>
        <dbReference type="ChEBI" id="CHEBI:29033"/>
    </ligand>
</feature>
<feature type="binding site" evidence="1">
    <location>
        <position position="141"/>
    </location>
    <ligand>
        <name>Ni(2+)</name>
        <dbReference type="ChEBI" id="CHEBI:49786"/>
    </ligand>
</feature>
<feature type="site" description="May play a role in metal incorporation in vivo" evidence="1">
    <location>
        <position position="96"/>
    </location>
</feature>
<feature type="site" description="May play a role in transmitting local conformational changes" evidence="1">
    <location>
        <position position="102"/>
    </location>
</feature>
<feature type="site" description="Important to generate the dianion" evidence="1">
    <location>
        <position position="105"/>
    </location>
</feature>
<protein>
    <recommendedName>
        <fullName evidence="1">Acireductone dioxygenase</fullName>
    </recommendedName>
    <alternativeName>
        <fullName evidence="1">1,2-dihydroxy-3-keto-5-methylthiopentene dioxygenase</fullName>
        <shortName evidence="1">DHK-MTPene dioxygenase</shortName>
    </alternativeName>
    <alternativeName>
        <fullName evidence="1">Acireductone dioxygenase (Fe(2+)-requiring)</fullName>
        <shortName evidence="1">ARD'</shortName>
        <shortName evidence="1">Fe-ARD</shortName>
        <ecNumber evidence="1">1.13.11.54</ecNumber>
    </alternativeName>
    <alternativeName>
        <fullName evidence="1">Acireductone dioxygenase (Ni(2+)-requiring)</fullName>
        <shortName evidence="1">ARD</shortName>
        <shortName evidence="1">Ni-ARD</shortName>
        <ecNumber evidence="1">1.13.11.53</ecNumber>
    </alternativeName>
</protein>
<proteinExistence type="inferred from homology"/>
<dbReference type="EC" id="1.13.11.54" evidence="1"/>
<dbReference type="EC" id="1.13.11.53" evidence="1"/>
<dbReference type="EMBL" id="CP000822">
    <property type="protein sequence ID" value="ABV15045.1"/>
    <property type="molecule type" value="Genomic_DNA"/>
</dbReference>
<dbReference type="RefSeq" id="WP_012134737.1">
    <property type="nucleotide sequence ID" value="NC_009792.1"/>
</dbReference>
<dbReference type="SMR" id="A8ANI2"/>
<dbReference type="STRING" id="290338.CKO_03973"/>
<dbReference type="GeneID" id="45137625"/>
<dbReference type="KEGG" id="cko:CKO_03973"/>
<dbReference type="HOGENOM" id="CLU_125400_0_0_6"/>
<dbReference type="OrthoDB" id="9795636at2"/>
<dbReference type="UniPathway" id="UPA00904">
    <property type="reaction ID" value="UER00878"/>
</dbReference>
<dbReference type="Proteomes" id="UP000008148">
    <property type="component" value="Chromosome"/>
</dbReference>
<dbReference type="GO" id="GO:0010308">
    <property type="term" value="F:acireductone dioxygenase (Ni2+-requiring) activity"/>
    <property type="evidence" value="ECO:0007669"/>
    <property type="project" value="UniProtKB-UniRule"/>
</dbReference>
<dbReference type="GO" id="GO:0010309">
    <property type="term" value="F:acireductone dioxygenase [iron(II)-requiring] activity"/>
    <property type="evidence" value="ECO:0007669"/>
    <property type="project" value="UniProtKB-UniRule"/>
</dbReference>
<dbReference type="GO" id="GO:0005506">
    <property type="term" value="F:iron ion binding"/>
    <property type="evidence" value="ECO:0007669"/>
    <property type="project" value="UniProtKB-UniRule"/>
</dbReference>
<dbReference type="GO" id="GO:0016151">
    <property type="term" value="F:nickel cation binding"/>
    <property type="evidence" value="ECO:0007669"/>
    <property type="project" value="UniProtKB-UniRule"/>
</dbReference>
<dbReference type="GO" id="GO:0019509">
    <property type="term" value="P:L-methionine salvage from methylthioadenosine"/>
    <property type="evidence" value="ECO:0007669"/>
    <property type="project" value="UniProtKB-UniRule"/>
</dbReference>
<dbReference type="GO" id="GO:0019284">
    <property type="term" value="P:L-methionine salvage from S-adenosylmethionine"/>
    <property type="evidence" value="ECO:0007669"/>
    <property type="project" value="InterPro"/>
</dbReference>
<dbReference type="CDD" id="cd02232">
    <property type="entry name" value="cupin_ARD"/>
    <property type="match status" value="1"/>
</dbReference>
<dbReference type="Gene3D" id="2.60.120.10">
    <property type="entry name" value="Jelly Rolls"/>
    <property type="match status" value="1"/>
</dbReference>
<dbReference type="HAMAP" id="MF_01682">
    <property type="entry name" value="Salvage_MtnD"/>
    <property type="match status" value="1"/>
</dbReference>
<dbReference type="InterPro" id="IPR004313">
    <property type="entry name" value="ARD"/>
</dbReference>
<dbReference type="InterPro" id="IPR023956">
    <property type="entry name" value="ARD_bac"/>
</dbReference>
<dbReference type="InterPro" id="IPR014710">
    <property type="entry name" value="RmlC-like_jellyroll"/>
</dbReference>
<dbReference type="InterPro" id="IPR011051">
    <property type="entry name" value="RmlC_Cupin_sf"/>
</dbReference>
<dbReference type="PANTHER" id="PTHR23418">
    <property type="entry name" value="ACIREDUCTONE DIOXYGENASE"/>
    <property type="match status" value="1"/>
</dbReference>
<dbReference type="PANTHER" id="PTHR23418:SF0">
    <property type="entry name" value="ACIREDUCTONE DIOXYGENASE"/>
    <property type="match status" value="1"/>
</dbReference>
<dbReference type="Pfam" id="PF03079">
    <property type="entry name" value="ARD"/>
    <property type="match status" value="1"/>
</dbReference>
<dbReference type="SUPFAM" id="SSF51182">
    <property type="entry name" value="RmlC-like cupins"/>
    <property type="match status" value="1"/>
</dbReference>